<dbReference type="EMBL" id="CP000886">
    <property type="protein sequence ID" value="ABX65719.1"/>
    <property type="status" value="ALT_INIT"/>
    <property type="molecule type" value="Genomic_DNA"/>
</dbReference>
<dbReference type="RefSeq" id="WP_000246886.1">
    <property type="nucleotide sequence ID" value="NC_010102.1"/>
</dbReference>
<dbReference type="SMR" id="A9N0R7"/>
<dbReference type="KEGG" id="spq:SPAB_00278"/>
<dbReference type="PATRIC" id="fig|1016998.12.peg.267"/>
<dbReference type="HOGENOM" id="CLU_138433_0_0_6"/>
<dbReference type="BioCyc" id="SENT1016998:SPAB_RS01120-MONOMER"/>
<dbReference type="Proteomes" id="UP000008556">
    <property type="component" value="Chromosome"/>
</dbReference>
<dbReference type="GO" id="GO:0022627">
    <property type="term" value="C:cytosolic small ribosomal subunit"/>
    <property type="evidence" value="ECO:0007669"/>
    <property type="project" value="TreeGrafter"/>
</dbReference>
<dbReference type="GO" id="GO:0003735">
    <property type="term" value="F:structural constituent of ribosome"/>
    <property type="evidence" value="ECO:0007669"/>
    <property type="project" value="InterPro"/>
</dbReference>
<dbReference type="GO" id="GO:0006412">
    <property type="term" value="P:translation"/>
    <property type="evidence" value="ECO:0007669"/>
    <property type="project" value="UniProtKB-UniRule"/>
</dbReference>
<dbReference type="CDD" id="cd01425">
    <property type="entry name" value="RPS2"/>
    <property type="match status" value="1"/>
</dbReference>
<dbReference type="FunFam" id="1.10.287.610:FF:000001">
    <property type="entry name" value="30S ribosomal protein S2"/>
    <property type="match status" value="1"/>
</dbReference>
<dbReference type="Gene3D" id="3.40.50.10490">
    <property type="entry name" value="Glucose-6-phosphate isomerase like protein, domain 1"/>
    <property type="match status" value="1"/>
</dbReference>
<dbReference type="Gene3D" id="1.10.287.610">
    <property type="entry name" value="Helix hairpin bin"/>
    <property type="match status" value="1"/>
</dbReference>
<dbReference type="HAMAP" id="MF_00291_B">
    <property type="entry name" value="Ribosomal_uS2_B"/>
    <property type="match status" value="1"/>
</dbReference>
<dbReference type="InterPro" id="IPR001865">
    <property type="entry name" value="Ribosomal_uS2"/>
</dbReference>
<dbReference type="InterPro" id="IPR005706">
    <property type="entry name" value="Ribosomal_uS2_bac/mit/plastid"/>
</dbReference>
<dbReference type="InterPro" id="IPR018130">
    <property type="entry name" value="Ribosomal_uS2_CS"/>
</dbReference>
<dbReference type="InterPro" id="IPR023591">
    <property type="entry name" value="Ribosomal_uS2_flav_dom_sf"/>
</dbReference>
<dbReference type="NCBIfam" id="TIGR01011">
    <property type="entry name" value="rpsB_bact"/>
    <property type="match status" value="1"/>
</dbReference>
<dbReference type="PANTHER" id="PTHR12534">
    <property type="entry name" value="30S RIBOSOMAL PROTEIN S2 PROKARYOTIC AND ORGANELLAR"/>
    <property type="match status" value="1"/>
</dbReference>
<dbReference type="PANTHER" id="PTHR12534:SF0">
    <property type="entry name" value="SMALL RIBOSOMAL SUBUNIT PROTEIN US2M"/>
    <property type="match status" value="1"/>
</dbReference>
<dbReference type="Pfam" id="PF00318">
    <property type="entry name" value="Ribosomal_S2"/>
    <property type="match status" value="1"/>
</dbReference>
<dbReference type="PRINTS" id="PR00395">
    <property type="entry name" value="RIBOSOMALS2"/>
</dbReference>
<dbReference type="SUPFAM" id="SSF52313">
    <property type="entry name" value="Ribosomal protein S2"/>
    <property type="match status" value="1"/>
</dbReference>
<dbReference type="PROSITE" id="PS00962">
    <property type="entry name" value="RIBOSOMAL_S2_1"/>
    <property type="match status" value="1"/>
</dbReference>
<dbReference type="PROSITE" id="PS00963">
    <property type="entry name" value="RIBOSOMAL_S2_2"/>
    <property type="match status" value="1"/>
</dbReference>
<accession>A9N0R7</accession>
<keyword id="KW-0687">Ribonucleoprotein</keyword>
<keyword id="KW-0689">Ribosomal protein</keyword>
<organism>
    <name type="scientific">Salmonella paratyphi B (strain ATCC BAA-1250 / SPB7)</name>
    <dbReference type="NCBI Taxonomy" id="1016998"/>
    <lineage>
        <taxon>Bacteria</taxon>
        <taxon>Pseudomonadati</taxon>
        <taxon>Pseudomonadota</taxon>
        <taxon>Gammaproteobacteria</taxon>
        <taxon>Enterobacterales</taxon>
        <taxon>Enterobacteriaceae</taxon>
        <taxon>Salmonella</taxon>
    </lineage>
</organism>
<gene>
    <name evidence="1" type="primary">rpsB</name>
    <name type="ordered locus">SPAB_00278</name>
</gene>
<name>RS2_SALPB</name>
<feature type="chain" id="PRO_0000352035" description="Small ribosomal subunit protein uS2">
    <location>
        <begin position="1"/>
        <end position="241"/>
    </location>
</feature>
<comment type="similarity">
    <text evidence="1">Belongs to the universal ribosomal protein uS2 family.</text>
</comment>
<comment type="sequence caution" evidence="2">
    <conflict type="erroneous initiation">
        <sequence resource="EMBL-CDS" id="ABX65719"/>
    </conflict>
</comment>
<protein>
    <recommendedName>
        <fullName evidence="1">Small ribosomal subunit protein uS2</fullName>
    </recommendedName>
    <alternativeName>
        <fullName evidence="2">30S ribosomal protein S2</fullName>
    </alternativeName>
</protein>
<evidence type="ECO:0000255" key="1">
    <source>
        <dbReference type="HAMAP-Rule" id="MF_00291"/>
    </source>
</evidence>
<evidence type="ECO:0000305" key="2"/>
<proteinExistence type="inferred from homology"/>
<reference key="1">
    <citation type="submission" date="2007-11" db="EMBL/GenBank/DDBJ databases">
        <authorList>
            <consortium name="The Salmonella enterica serovar Paratyphi B Genome Sequencing Project"/>
            <person name="McClelland M."/>
            <person name="Sanderson E.K."/>
            <person name="Porwollik S."/>
            <person name="Spieth J."/>
            <person name="Clifton W.S."/>
            <person name="Fulton R."/>
            <person name="Cordes M."/>
            <person name="Wollam A."/>
            <person name="Shah N."/>
            <person name="Pepin K."/>
            <person name="Bhonagiri V."/>
            <person name="Nash W."/>
            <person name="Johnson M."/>
            <person name="Thiruvilangam P."/>
            <person name="Wilson R."/>
        </authorList>
    </citation>
    <scope>NUCLEOTIDE SEQUENCE [LARGE SCALE GENOMIC DNA]</scope>
    <source>
        <strain>ATCC BAA-1250 / SPB7</strain>
    </source>
</reference>
<sequence>MATVSMRDMLKAGVHFGHQTRYWNPKMKPFIFGARNKVHIINLEKTVPMFNEALAELNKISARKGKILFVGTKRAASEAVKEAANSCDQFFVNHRWLGGMLTNWKTVRQSIKRLKDLETQSQDGTFEKLTKKEALMRTRELEKLENSLGGIKDMGGLPDALFVIDADHEHIAIKEANNLGIPVFAIVDTNSDPDGVDFVIPGNDDAIRAVSLYLGAVAATVREGRSQDLASQAEESFVEAE</sequence>